<reference key="1">
    <citation type="journal article" date="2003" name="J. Bacteriol.">
        <title>Complete genome sequence of the oral pathogenic bacterium Porphyromonas gingivalis strain W83.</title>
        <authorList>
            <person name="Nelson K.E."/>
            <person name="Fleischmann R.D."/>
            <person name="DeBoy R.T."/>
            <person name="Paulsen I.T."/>
            <person name="Fouts D.E."/>
            <person name="Eisen J.A."/>
            <person name="Daugherty S.C."/>
            <person name="Dodson R.J."/>
            <person name="Durkin A.S."/>
            <person name="Gwinn M.L."/>
            <person name="Haft D.H."/>
            <person name="Kolonay J.F."/>
            <person name="Nelson W.C."/>
            <person name="Mason T.M."/>
            <person name="Tallon L."/>
            <person name="Gray J."/>
            <person name="Granger D."/>
            <person name="Tettelin H."/>
            <person name="Dong H."/>
            <person name="Galvin J.L."/>
            <person name="Duncan M.J."/>
            <person name="Dewhirst F.E."/>
            <person name="Fraser C.M."/>
        </authorList>
    </citation>
    <scope>NUCLEOTIDE SEQUENCE [LARGE SCALE GENOMIC DNA]</scope>
    <source>
        <strain>ATCC BAA-308 / W83</strain>
    </source>
</reference>
<organism>
    <name type="scientific">Porphyromonas gingivalis (strain ATCC BAA-308 / W83)</name>
    <dbReference type="NCBI Taxonomy" id="242619"/>
    <lineage>
        <taxon>Bacteria</taxon>
        <taxon>Pseudomonadati</taxon>
        <taxon>Bacteroidota</taxon>
        <taxon>Bacteroidia</taxon>
        <taxon>Bacteroidales</taxon>
        <taxon>Porphyromonadaceae</taxon>
        <taxon>Porphyromonas</taxon>
    </lineage>
</organism>
<name>YBEY_PORGI</name>
<gene>
    <name evidence="1" type="primary">ybeY</name>
    <name type="ordered locus">PG_0510</name>
</gene>
<sequence>MAKINFYAEGVSLPRIRRRIVGKWIAEVCSRYGKAVGEISYLFCDDEYILKANQEFLDHDYYTDIITFDSCEADTVNGDLLISLDTVRSNARALDLRYEDELHRVIIHGILHLCGLKDKSKKDEAQMRAAEEKALVMLRETIGSELSLLHT</sequence>
<accession>Q7MWS9</accession>
<protein>
    <recommendedName>
        <fullName evidence="1">Endoribonuclease YbeY</fullName>
        <ecNumber evidence="1">3.1.-.-</ecNumber>
    </recommendedName>
</protein>
<evidence type="ECO:0000255" key="1">
    <source>
        <dbReference type="HAMAP-Rule" id="MF_00009"/>
    </source>
</evidence>
<feature type="chain" id="PRO_0000102505" description="Endoribonuclease YbeY">
    <location>
        <begin position="1"/>
        <end position="151"/>
    </location>
</feature>
<feature type="binding site" evidence="1">
    <location>
        <position position="108"/>
    </location>
    <ligand>
        <name>Zn(2+)</name>
        <dbReference type="ChEBI" id="CHEBI:29105"/>
        <note>catalytic</note>
    </ligand>
</feature>
<feature type="binding site" evidence="1">
    <location>
        <position position="112"/>
    </location>
    <ligand>
        <name>Zn(2+)</name>
        <dbReference type="ChEBI" id="CHEBI:29105"/>
        <note>catalytic</note>
    </ligand>
</feature>
<feature type="binding site" evidence="1">
    <location>
        <position position="118"/>
    </location>
    <ligand>
        <name>Zn(2+)</name>
        <dbReference type="ChEBI" id="CHEBI:29105"/>
        <note>catalytic</note>
    </ligand>
</feature>
<dbReference type="EC" id="3.1.-.-" evidence="1"/>
<dbReference type="EMBL" id="AE015924">
    <property type="protein sequence ID" value="AAQ65704.1"/>
    <property type="molecule type" value="Genomic_DNA"/>
</dbReference>
<dbReference type="RefSeq" id="WP_005875087.1">
    <property type="nucleotide sequence ID" value="NC_002950.2"/>
</dbReference>
<dbReference type="SMR" id="Q7MWS9"/>
<dbReference type="STRING" id="242619.PG_0510"/>
<dbReference type="EnsemblBacteria" id="AAQ65704">
    <property type="protein sequence ID" value="AAQ65704"/>
    <property type="gene ID" value="PG_0510"/>
</dbReference>
<dbReference type="KEGG" id="pgi:PG_0510"/>
<dbReference type="eggNOG" id="COG0319">
    <property type="taxonomic scope" value="Bacteria"/>
</dbReference>
<dbReference type="HOGENOM" id="CLU_106710_3_3_10"/>
<dbReference type="Proteomes" id="UP000000588">
    <property type="component" value="Chromosome"/>
</dbReference>
<dbReference type="GO" id="GO:0005737">
    <property type="term" value="C:cytoplasm"/>
    <property type="evidence" value="ECO:0007669"/>
    <property type="project" value="UniProtKB-SubCell"/>
</dbReference>
<dbReference type="GO" id="GO:0004222">
    <property type="term" value="F:metalloendopeptidase activity"/>
    <property type="evidence" value="ECO:0007669"/>
    <property type="project" value="InterPro"/>
</dbReference>
<dbReference type="GO" id="GO:0004521">
    <property type="term" value="F:RNA endonuclease activity"/>
    <property type="evidence" value="ECO:0007669"/>
    <property type="project" value="UniProtKB-UniRule"/>
</dbReference>
<dbReference type="GO" id="GO:0008270">
    <property type="term" value="F:zinc ion binding"/>
    <property type="evidence" value="ECO:0007669"/>
    <property type="project" value="UniProtKB-UniRule"/>
</dbReference>
<dbReference type="GO" id="GO:0006364">
    <property type="term" value="P:rRNA processing"/>
    <property type="evidence" value="ECO:0007669"/>
    <property type="project" value="UniProtKB-UniRule"/>
</dbReference>
<dbReference type="Gene3D" id="3.40.390.30">
    <property type="entry name" value="Metalloproteases ('zincins'), catalytic domain"/>
    <property type="match status" value="1"/>
</dbReference>
<dbReference type="HAMAP" id="MF_00009">
    <property type="entry name" value="Endoribonucl_YbeY"/>
    <property type="match status" value="1"/>
</dbReference>
<dbReference type="InterPro" id="IPR023091">
    <property type="entry name" value="MetalPrtase_cat_dom_sf_prd"/>
</dbReference>
<dbReference type="InterPro" id="IPR002036">
    <property type="entry name" value="YbeY"/>
</dbReference>
<dbReference type="NCBIfam" id="TIGR00043">
    <property type="entry name" value="rRNA maturation RNase YbeY"/>
    <property type="match status" value="1"/>
</dbReference>
<dbReference type="PANTHER" id="PTHR46986">
    <property type="entry name" value="ENDORIBONUCLEASE YBEY, CHLOROPLASTIC"/>
    <property type="match status" value="1"/>
</dbReference>
<dbReference type="PANTHER" id="PTHR46986:SF1">
    <property type="entry name" value="ENDORIBONUCLEASE YBEY, CHLOROPLASTIC"/>
    <property type="match status" value="1"/>
</dbReference>
<dbReference type="Pfam" id="PF02130">
    <property type="entry name" value="YbeY"/>
    <property type="match status" value="1"/>
</dbReference>
<dbReference type="SUPFAM" id="SSF55486">
    <property type="entry name" value="Metalloproteases ('zincins'), catalytic domain"/>
    <property type="match status" value="1"/>
</dbReference>
<keyword id="KW-0963">Cytoplasm</keyword>
<keyword id="KW-0255">Endonuclease</keyword>
<keyword id="KW-0378">Hydrolase</keyword>
<keyword id="KW-0479">Metal-binding</keyword>
<keyword id="KW-0540">Nuclease</keyword>
<keyword id="KW-1185">Reference proteome</keyword>
<keyword id="KW-0690">Ribosome biogenesis</keyword>
<keyword id="KW-0698">rRNA processing</keyword>
<keyword id="KW-0862">Zinc</keyword>
<comment type="function">
    <text evidence="1">Single strand-specific metallo-endoribonuclease involved in late-stage 70S ribosome quality control and in maturation of the 3' terminus of the 16S rRNA.</text>
</comment>
<comment type="cofactor">
    <cofactor evidence="1">
        <name>Zn(2+)</name>
        <dbReference type="ChEBI" id="CHEBI:29105"/>
    </cofactor>
    <text evidence="1">Binds 1 zinc ion.</text>
</comment>
<comment type="subcellular location">
    <subcellularLocation>
        <location evidence="1">Cytoplasm</location>
    </subcellularLocation>
</comment>
<comment type="similarity">
    <text evidence="1">Belongs to the endoribonuclease YbeY family.</text>
</comment>
<proteinExistence type="inferred from homology"/>